<reference key="1">
    <citation type="submission" date="1999-08" db="EMBL/GenBank/DDBJ databases">
        <title>Sequences and map position of 31 Arabidopsis thaliana cDNAs encoding organellar polypeptides.</title>
        <authorList>
            <person name="Legen J."/>
            <person name="Misera S."/>
            <person name="Herrmann R.G."/>
            <person name="Altschmied L."/>
        </authorList>
    </citation>
    <scope>NUCLEOTIDE SEQUENCE [MRNA]</scope>
    <source>
        <strain>cv. Columbia</strain>
    </source>
</reference>
<reference key="2">
    <citation type="journal article" date="2000" name="Nature">
        <title>Sequence and analysis of chromosome 1 of the plant Arabidopsis thaliana.</title>
        <authorList>
            <person name="Theologis A."/>
            <person name="Ecker J.R."/>
            <person name="Palm C.J."/>
            <person name="Federspiel N.A."/>
            <person name="Kaul S."/>
            <person name="White O."/>
            <person name="Alonso J."/>
            <person name="Altafi H."/>
            <person name="Araujo R."/>
            <person name="Bowman C.L."/>
            <person name="Brooks S.Y."/>
            <person name="Buehler E."/>
            <person name="Chan A."/>
            <person name="Chao Q."/>
            <person name="Chen H."/>
            <person name="Cheuk R.F."/>
            <person name="Chin C.W."/>
            <person name="Chung M.K."/>
            <person name="Conn L."/>
            <person name="Conway A.B."/>
            <person name="Conway A.R."/>
            <person name="Creasy T.H."/>
            <person name="Dewar K."/>
            <person name="Dunn P."/>
            <person name="Etgu P."/>
            <person name="Feldblyum T.V."/>
            <person name="Feng J.-D."/>
            <person name="Fong B."/>
            <person name="Fujii C.Y."/>
            <person name="Gill J.E."/>
            <person name="Goldsmith A.D."/>
            <person name="Haas B."/>
            <person name="Hansen N.F."/>
            <person name="Hughes B."/>
            <person name="Huizar L."/>
            <person name="Hunter J.L."/>
            <person name="Jenkins J."/>
            <person name="Johnson-Hopson C."/>
            <person name="Khan S."/>
            <person name="Khaykin E."/>
            <person name="Kim C.J."/>
            <person name="Koo H.L."/>
            <person name="Kremenetskaia I."/>
            <person name="Kurtz D.B."/>
            <person name="Kwan A."/>
            <person name="Lam B."/>
            <person name="Langin-Hooper S."/>
            <person name="Lee A."/>
            <person name="Lee J.M."/>
            <person name="Lenz C.A."/>
            <person name="Li J.H."/>
            <person name="Li Y.-P."/>
            <person name="Lin X."/>
            <person name="Liu S.X."/>
            <person name="Liu Z.A."/>
            <person name="Luros J.S."/>
            <person name="Maiti R."/>
            <person name="Marziali A."/>
            <person name="Militscher J."/>
            <person name="Miranda M."/>
            <person name="Nguyen M."/>
            <person name="Nierman W.C."/>
            <person name="Osborne B.I."/>
            <person name="Pai G."/>
            <person name="Peterson J."/>
            <person name="Pham P.K."/>
            <person name="Rizzo M."/>
            <person name="Rooney T."/>
            <person name="Rowley D."/>
            <person name="Sakano H."/>
            <person name="Salzberg S.L."/>
            <person name="Schwartz J.R."/>
            <person name="Shinn P."/>
            <person name="Southwick A.M."/>
            <person name="Sun H."/>
            <person name="Tallon L.J."/>
            <person name="Tambunga G."/>
            <person name="Toriumi M.J."/>
            <person name="Town C.D."/>
            <person name="Utterback T."/>
            <person name="Van Aken S."/>
            <person name="Vaysberg M."/>
            <person name="Vysotskaia V.S."/>
            <person name="Walker M."/>
            <person name="Wu D."/>
            <person name="Yu G."/>
            <person name="Fraser C.M."/>
            <person name="Venter J.C."/>
            <person name="Davis R.W."/>
        </authorList>
    </citation>
    <scope>NUCLEOTIDE SEQUENCE [LARGE SCALE GENOMIC DNA]</scope>
    <source>
        <strain>cv. Columbia</strain>
    </source>
</reference>
<reference key="3">
    <citation type="journal article" date="2017" name="Plant J.">
        <title>Araport11: a complete reannotation of the Arabidopsis thaliana reference genome.</title>
        <authorList>
            <person name="Cheng C.Y."/>
            <person name="Krishnakumar V."/>
            <person name="Chan A.P."/>
            <person name="Thibaud-Nissen F."/>
            <person name="Schobel S."/>
            <person name="Town C.D."/>
        </authorList>
    </citation>
    <scope>GENOME REANNOTATION</scope>
    <source>
        <strain>cv. Columbia</strain>
    </source>
</reference>
<reference key="4">
    <citation type="journal article" date="2003" name="Science">
        <title>Empirical analysis of transcriptional activity in the Arabidopsis genome.</title>
        <authorList>
            <person name="Yamada K."/>
            <person name="Lim J."/>
            <person name="Dale J.M."/>
            <person name="Chen H."/>
            <person name="Shinn P."/>
            <person name="Palm C.J."/>
            <person name="Southwick A.M."/>
            <person name="Wu H.C."/>
            <person name="Kim C.J."/>
            <person name="Nguyen M."/>
            <person name="Pham P.K."/>
            <person name="Cheuk R.F."/>
            <person name="Karlin-Newmann G."/>
            <person name="Liu S.X."/>
            <person name="Lam B."/>
            <person name="Sakano H."/>
            <person name="Wu T."/>
            <person name="Yu G."/>
            <person name="Miranda M."/>
            <person name="Quach H.L."/>
            <person name="Tripp M."/>
            <person name="Chang C.H."/>
            <person name="Lee J.M."/>
            <person name="Toriumi M.J."/>
            <person name="Chan M.M."/>
            <person name="Tang C.C."/>
            <person name="Onodera C.S."/>
            <person name="Deng J.M."/>
            <person name="Akiyama K."/>
            <person name="Ansari Y."/>
            <person name="Arakawa T."/>
            <person name="Banh J."/>
            <person name="Banno F."/>
            <person name="Bowser L."/>
            <person name="Brooks S.Y."/>
            <person name="Carninci P."/>
            <person name="Chao Q."/>
            <person name="Choy N."/>
            <person name="Enju A."/>
            <person name="Goldsmith A.D."/>
            <person name="Gurjal M."/>
            <person name="Hansen N.F."/>
            <person name="Hayashizaki Y."/>
            <person name="Johnson-Hopson C."/>
            <person name="Hsuan V.W."/>
            <person name="Iida K."/>
            <person name="Karnes M."/>
            <person name="Khan S."/>
            <person name="Koesema E."/>
            <person name="Ishida J."/>
            <person name="Jiang P.X."/>
            <person name="Jones T."/>
            <person name="Kawai J."/>
            <person name="Kamiya A."/>
            <person name="Meyers C."/>
            <person name="Nakajima M."/>
            <person name="Narusaka M."/>
            <person name="Seki M."/>
            <person name="Sakurai T."/>
            <person name="Satou M."/>
            <person name="Tamse R."/>
            <person name="Vaysberg M."/>
            <person name="Wallender E.K."/>
            <person name="Wong C."/>
            <person name="Yamamura Y."/>
            <person name="Yuan S."/>
            <person name="Shinozaki K."/>
            <person name="Davis R.W."/>
            <person name="Theologis A."/>
            <person name="Ecker J.R."/>
        </authorList>
    </citation>
    <scope>NUCLEOTIDE SEQUENCE [LARGE SCALE MRNA]</scope>
    <source>
        <strain>cv. Columbia</strain>
    </source>
</reference>
<dbReference type="EMBL" id="AJ245866">
    <property type="protein sequence ID" value="CAB53033.1"/>
    <property type="molecule type" value="mRNA"/>
</dbReference>
<dbReference type="EMBL" id="AC025295">
    <property type="protein sequence ID" value="AAG51099.1"/>
    <property type="molecule type" value="Genomic_DNA"/>
</dbReference>
<dbReference type="EMBL" id="CP002684">
    <property type="protein sequence ID" value="AEE31211.1"/>
    <property type="molecule type" value="Genomic_DNA"/>
</dbReference>
<dbReference type="EMBL" id="AY039848">
    <property type="protein sequence ID" value="AAK63952.1"/>
    <property type="molecule type" value="mRNA"/>
</dbReference>
<dbReference type="EMBL" id="AY074826">
    <property type="protein sequence ID" value="AAL69522.1"/>
    <property type="molecule type" value="mRNA"/>
</dbReference>
<dbReference type="PIR" id="B86428">
    <property type="entry name" value="B86428"/>
</dbReference>
<dbReference type="RefSeq" id="NP_174327.1">
    <property type="nucleotide sequence ID" value="NM_102775.4"/>
</dbReference>
<dbReference type="PDB" id="7WFD">
    <property type="method" value="EM"/>
    <property type="resolution" value="3.25 A"/>
    <property type="chains" value="AK=1-130"/>
</dbReference>
<dbReference type="PDB" id="7WFE">
    <property type="method" value="EM"/>
    <property type="resolution" value="3.25 A"/>
    <property type="chains" value="BK=1-130"/>
</dbReference>
<dbReference type="PDB" id="7WG5">
    <property type="method" value="EM"/>
    <property type="resolution" value="3.89 A"/>
    <property type="chains" value="AK/BK=1-130"/>
</dbReference>
<dbReference type="PDB" id="8J6Z">
    <property type="method" value="EM"/>
    <property type="resolution" value="2.79 A"/>
    <property type="chains" value="K=1-130"/>
</dbReference>
<dbReference type="PDB" id="8J7A">
    <property type="method" value="EM"/>
    <property type="resolution" value="3.06 A"/>
    <property type="chains" value="K=1-130"/>
</dbReference>
<dbReference type="PDB" id="8J7B">
    <property type="method" value="EM"/>
    <property type="resolution" value="3.22 A"/>
    <property type="chains" value="K=1-130"/>
</dbReference>
<dbReference type="PDBsum" id="7WFD"/>
<dbReference type="PDBsum" id="7WFE"/>
<dbReference type="PDBsum" id="7WG5"/>
<dbReference type="PDBsum" id="8J6Z"/>
<dbReference type="PDBsum" id="8J7A"/>
<dbReference type="PDBsum" id="8J7B"/>
<dbReference type="EMDB" id="EMD-32462"/>
<dbReference type="EMDB" id="EMD-32463"/>
<dbReference type="EMDB" id="EMD-32477"/>
<dbReference type="EMDB" id="EMD-36021"/>
<dbReference type="EMDB" id="EMD-36036"/>
<dbReference type="EMDB" id="EMD-36037"/>
<dbReference type="SMR" id="Q9SUI5"/>
<dbReference type="BioGRID" id="25153">
    <property type="interactions" value="3"/>
</dbReference>
<dbReference type="FunCoup" id="Q9SUI5">
    <property type="interactions" value="1108"/>
</dbReference>
<dbReference type="STRING" id="3702.Q9SUI5"/>
<dbReference type="TCDB" id="5.B.4.1.1">
    <property type="family name" value="the plant photosystem i supercomplex (psi) family"/>
</dbReference>
<dbReference type="iPTMnet" id="Q9SUI5"/>
<dbReference type="PaxDb" id="3702-AT1G30380.1"/>
<dbReference type="ProteomicsDB" id="226324"/>
<dbReference type="EnsemblPlants" id="AT1G30380.1">
    <property type="protein sequence ID" value="AT1G30380.1"/>
    <property type="gene ID" value="AT1G30380"/>
</dbReference>
<dbReference type="GeneID" id="839918"/>
<dbReference type="Gramene" id="AT1G30380.1">
    <property type="protein sequence ID" value="AT1G30380.1"/>
    <property type="gene ID" value="AT1G30380"/>
</dbReference>
<dbReference type="KEGG" id="ath:AT1G30380"/>
<dbReference type="Araport" id="AT1G30380"/>
<dbReference type="TAIR" id="AT1G30380">
    <property type="gene designation" value="PSAK"/>
</dbReference>
<dbReference type="eggNOG" id="ENOG502RZHF">
    <property type="taxonomic scope" value="Eukaryota"/>
</dbReference>
<dbReference type="HOGENOM" id="CLU_158886_0_0_1"/>
<dbReference type="InParanoid" id="Q9SUI5"/>
<dbReference type="OMA" id="RCGDFLG"/>
<dbReference type="PhylomeDB" id="Q9SUI5"/>
<dbReference type="BioCyc" id="ARA:AT1G30380-MONOMER"/>
<dbReference type="BioCyc" id="MetaCyc:MONOMER-1091"/>
<dbReference type="CD-CODE" id="4299E36E">
    <property type="entry name" value="Nucleolus"/>
</dbReference>
<dbReference type="PRO" id="PR:Q9SUI5"/>
<dbReference type="Proteomes" id="UP000006548">
    <property type="component" value="Chromosome 1"/>
</dbReference>
<dbReference type="ExpressionAtlas" id="Q9SUI5">
    <property type="expression patterns" value="baseline and differential"/>
</dbReference>
<dbReference type="GO" id="GO:0009507">
    <property type="term" value="C:chloroplast"/>
    <property type="evidence" value="ECO:0007005"/>
    <property type="project" value="TAIR"/>
</dbReference>
<dbReference type="GO" id="GO:0009534">
    <property type="term" value="C:chloroplast thylakoid"/>
    <property type="evidence" value="ECO:0007005"/>
    <property type="project" value="TAIR"/>
</dbReference>
<dbReference type="GO" id="GO:0009535">
    <property type="term" value="C:chloroplast thylakoid membrane"/>
    <property type="evidence" value="ECO:0007005"/>
    <property type="project" value="TAIR"/>
</dbReference>
<dbReference type="GO" id="GO:0005634">
    <property type="term" value="C:nucleus"/>
    <property type="evidence" value="ECO:0007005"/>
    <property type="project" value="TAIR"/>
</dbReference>
<dbReference type="GO" id="GO:0009522">
    <property type="term" value="C:photosystem I"/>
    <property type="evidence" value="ECO:0007669"/>
    <property type="project" value="UniProtKB-KW"/>
</dbReference>
<dbReference type="GO" id="GO:0009579">
    <property type="term" value="C:thylakoid"/>
    <property type="evidence" value="ECO:0007005"/>
    <property type="project" value="TAIR"/>
</dbReference>
<dbReference type="GO" id="GO:0015979">
    <property type="term" value="P:photosynthesis"/>
    <property type="evidence" value="ECO:0007669"/>
    <property type="project" value="UniProtKB-KW"/>
</dbReference>
<dbReference type="FunFam" id="1.10.286.40:FF:000001">
    <property type="entry name" value="Photosystem I reaction center subunit psaK"/>
    <property type="match status" value="1"/>
</dbReference>
<dbReference type="Gene3D" id="1.10.286.40">
    <property type="entry name" value="Chlorophyll a-b binding protein like"/>
    <property type="match status" value="1"/>
</dbReference>
<dbReference type="InterPro" id="IPR035982">
    <property type="entry name" value="PSI_centre_PsaK_sf"/>
</dbReference>
<dbReference type="InterPro" id="IPR000549">
    <property type="entry name" value="PSI_PsaG/PsaK"/>
</dbReference>
<dbReference type="InterPro" id="IPR023618">
    <property type="entry name" value="PSI_PsaG/PsaK_dom"/>
</dbReference>
<dbReference type="InterPro" id="IPR016370">
    <property type="entry name" value="PSI_PsaG/PsaK_pln"/>
</dbReference>
<dbReference type="InterPro" id="IPR017493">
    <property type="entry name" value="PSI_PsaK_pln"/>
</dbReference>
<dbReference type="NCBIfam" id="TIGR03050">
    <property type="entry name" value="PS_I_psaK_plant"/>
    <property type="match status" value="1"/>
</dbReference>
<dbReference type="PANTHER" id="PTHR34195:SF2">
    <property type="entry name" value="PHOTOSYSTEM I REACTION CENTER SUBUNIT PSAK, CHLOROPLASTIC"/>
    <property type="match status" value="1"/>
</dbReference>
<dbReference type="PANTHER" id="PTHR34195">
    <property type="entry name" value="PHOTOSYSTEM I REACTION CENTER SUBUNIT V, CHLOROPLASTIC-RELATED"/>
    <property type="match status" value="1"/>
</dbReference>
<dbReference type="Pfam" id="PF01241">
    <property type="entry name" value="PSI_PSAK"/>
    <property type="match status" value="1"/>
</dbReference>
<dbReference type="PIRSF" id="PIRSF002912">
    <property type="entry name" value="PSI_PsaK"/>
    <property type="match status" value="1"/>
</dbReference>
<dbReference type="SUPFAM" id="SSF81563">
    <property type="entry name" value="Photosystem I reaction center subunit X, PsaK"/>
    <property type="match status" value="1"/>
</dbReference>
<dbReference type="PROSITE" id="PS01026">
    <property type="entry name" value="PHOTOSYSTEM_I_PSAGK"/>
    <property type="match status" value="1"/>
</dbReference>
<accession>Q9SUI5</accession>
<accession>Q9C8G7</accession>
<keyword id="KW-0002">3D-structure</keyword>
<keyword id="KW-0150">Chloroplast</keyword>
<keyword id="KW-0472">Membrane</keyword>
<keyword id="KW-0602">Photosynthesis</keyword>
<keyword id="KW-0603">Photosystem I</keyword>
<keyword id="KW-0934">Plastid</keyword>
<keyword id="KW-1185">Reference proteome</keyword>
<keyword id="KW-0793">Thylakoid</keyword>
<keyword id="KW-0809">Transit peptide</keyword>
<keyword id="KW-0812">Transmembrane</keyword>
<keyword id="KW-1133">Transmembrane helix</keyword>
<name>PSAK_ARATH</name>
<comment type="subcellular location">
    <subcellularLocation>
        <location evidence="1">Plastid</location>
        <location evidence="1">Chloroplast thylakoid membrane</location>
        <topology evidence="1">Multi-pass membrane protein</topology>
    </subcellularLocation>
</comment>
<comment type="similarity">
    <text evidence="3">Belongs to the PsaG/PsaK family.</text>
</comment>
<protein>
    <recommendedName>
        <fullName>Photosystem I reaction center subunit psaK, chloroplastic</fullName>
    </recommendedName>
    <alternativeName>
        <fullName>PSI-K</fullName>
    </alternativeName>
    <alternativeName>
        <fullName>Photosystem I subunit X</fullName>
    </alternativeName>
</protein>
<sequence>MASTMMTTLPQFNGLRATKISAAPVQGLASVQPMRRKGNGALGAKCDFIGSSTNLIMVTSTTLMLFAGRFGLAPSANRKATAGLRLEARDSGLQTGDPAGFTLADTLACGTVGHIIGVGVVLGLKNIGAI</sequence>
<proteinExistence type="evidence at protein level"/>
<organism>
    <name type="scientific">Arabidopsis thaliana</name>
    <name type="common">Mouse-ear cress</name>
    <dbReference type="NCBI Taxonomy" id="3702"/>
    <lineage>
        <taxon>Eukaryota</taxon>
        <taxon>Viridiplantae</taxon>
        <taxon>Streptophyta</taxon>
        <taxon>Embryophyta</taxon>
        <taxon>Tracheophyta</taxon>
        <taxon>Spermatophyta</taxon>
        <taxon>Magnoliopsida</taxon>
        <taxon>eudicotyledons</taxon>
        <taxon>Gunneridae</taxon>
        <taxon>Pentapetalae</taxon>
        <taxon>rosids</taxon>
        <taxon>malvids</taxon>
        <taxon>Brassicales</taxon>
        <taxon>Brassicaceae</taxon>
        <taxon>Camelineae</taxon>
        <taxon>Arabidopsis</taxon>
    </lineage>
</organism>
<feature type="transit peptide" description="Chloroplast" evidence="1">
    <location>
        <begin position="1"/>
        <end position="46"/>
    </location>
</feature>
<feature type="chain" id="PRO_0000029392" description="Photosystem I reaction center subunit psaK, chloroplastic">
    <location>
        <begin position="47"/>
        <end position="130"/>
    </location>
</feature>
<feature type="transmembrane region" description="Helical" evidence="2">
    <location>
        <begin position="48"/>
        <end position="68"/>
    </location>
</feature>
<feature type="transmembrane region" description="Helical" evidence="2">
    <location>
        <begin position="103"/>
        <end position="123"/>
    </location>
</feature>
<feature type="sequence conflict" description="In Ref. 1; CAB53033." evidence="3" ref="1">
    <original>I</original>
    <variation>F</variation>
    <location>
        <position position="130"/>
    </location>
</feature>
<feature type="helix" evidence="4">
    <location>
        <begin position="52"/>
        <end position="69"/>
    </location>
</feature>
<feature type="strand" evidence="4">
    <location>
        <begin position="78"/>
        <end position="80"/>
    </location>
</feature>
<feature type="strand" evidence="4">
    <location>
        <begin position="86"/>
        <end position="88"/>
    </location>
</feature>
<feature type="helix" evidence="4">
    <location>
        <begin position="103"/>
        <end position="126"/>
    </location>
</feature>
<gene>
    <name type="primary">PSAK</name>
    <name type="ordered locus">At1g30380</name>
    <name type="ORF">T4K22.2</name>
</gene>
<evidence type="ECO:0000250" key="1"/>
<evidence type="ECO:0000255" key="2"/>
<evidence type="ECO:0000305" key="3"/>
<evidence type="ECO:0007829" key="4">
    <source>
        <dbReference type="PDB" id="8J6Z"/>
    </source>
</evidence>